<evidence type="ECO:0000255" key="1">
    <source>
        <dbReference type="HAMAP-Rule" id="MF_00679"/>
    </source>
</evidence>
<sequence length="621" mass="65945">MALLQISEPGESPAPHQRRLAVGIDLGTTNSLVAAVRSSVPEVLPDEQGRPLLPSVVRYLPAGGAQIGYKAQVEAVRDPKNTIVSVKRFMGRGLKDVAHIENTPYDFVDAPGMVQLKTVAGVKSPVEVSAEILATLRQRAEDTLGDDLVGAVITVPAYFDDAQRQATKDAARLAGLNVLRLLNEPTAAAIAYGLDNAAEGVYAVYDLGGGTFDISVLKLTKGVFEVMSTGGDSALGGDDFDQRIACWIVEQAGLQPLSAEDMRLLLNKARAAKEWLSGADSTEVDAVLSTGETVHLVLTAETFAELTANLVQKTLAPVRRALRDAGVAVDEIQGVVLVGGATRMPVIRRAVAQLFGRAPLTNLDPDQVVAIGAAMQASLLAGNRAAGDDWLLLDVIPLSLGVETMGGLVEKIIPRNSTIPVARAQEFTTFKDGQTAMAIHVLQGERELAGDCRSLARFELRGIPPMVAGAARIRVTYQVDADGLLSVSARETVSGVEASIAVKPSYGLGDDDIARMLQEGFQSAEEDMRRRALAEERVEGERLLEALSHALDADGDLLSADERAAVDAQVAALRVTLQGEDHRAIKDAVDALSHGTDEFAARRMDRGIRAALAGKRIEELG</sequence>
<feature type="chain" id="PRO_0000078642" description="Chaperone protein HscA homolog">
    <location>
        <begin position="1"/>
        <end position="621"/>
    </location>
</feature>
<accession>Q8Y0L9</accession>
<reference key="1">
    <citation type="journal article" date="2002" name="Nature">
        <title>Genome sequence of the plant pathogen Ralstonia solanacearum.</title>
        <authorList>
            <person name="Salanoubat M."/>
            <person name="Genin S."/>
            <person name="Artiguenave F."/>
            <person name="Gouzy J."/>
            <person name="Mangenot S."/>
            <person name="Arlat M."/>
            <person name="Billault A."/>
            <person name="Brottier P."/>
            <person name="Camus J.-C."/>
            <person name="Cattolico L."/>
            <person name="Chandler M."/>
            <person name="Choisne N."/>
            <person name="Claudel-Renard C."/>
            <person name="Cunnac S."/>
            <person name="Demange N."/>
            <person name="Gaspin C."/>
            <person name="Lavie M."/>
            <person name="Moisan A."/>
            <person name="Robert C."/>
            <person name="Saurin W."/>
            <person name="Schiex T."/>
            <person name="Siguier P."/>
            <person name="Thebault P."/>
            <person name="Whalen M."/>
            <person name="Wincker P."/>
            <person name="Levy M."/>
            <person name="Weissenbach J."/>
            <person name="Boucher C.A."/>
        </authorList>
    </citation>
    <scope>NUCLEOTIDE SEQUENCE [LARGE SCALE GENOMIC DNA]</scope>
    <source>
        <strain>ATCC BAA-1114 / GMI1000</strain>
    </source>
</reference>
<organism>
    <name type="scientific">Ralstonia nicotianae (strain ATCC BAA-1114 / GMI1000)</name>
    <name type="common">Ralstonia solanacearum</name>
    <dbReference type="NCBI Taxonomy" id="267608"/>
    <lineage>
        <taxon>Bacteria</taxon>
        <taxon>Pseudomonadati</taxon>
        <taxon>Pseudomonadota</taxon>
        <taxon>Betaproteobacteria</taxon>
        <taxon>Burkholderiales</taxon>
        <taxon>Burkholderiaceae</taxon>
        <taxon>Ralstonia</taxon>
        <taxon>Ralstonia solanacearum species complex</taxon>
    </lineage>
</organism>
<proteinExistence type="inferred from homology"/>
<protein>
    <recommendedName>
        <fullName evidence="1">Chaperone protein HscA homolog</fullName>
    </recommendedName>
</protein>
<name>HSCA_RALN1</name>
<dbReference type="EMBL" id="AL646052">
    <property type="protein sequence ID" value="CAD14726.1"/>
    <property type="molecule type" value="Genomic_DNA"/>
</dbReference>
<dbReference type="RefSeq" id="WP_011000976.1">
    <property type="nucleotide sequence ID" value="NC_003295.1"/>
</dbReference>
<dbReference type="SMR" id="Q8Y0L9"/>
<dbReference type="STRING" id="267608.RSc1024"/>
<dbReference type="EnsemblBacteria" id="CAD14726">
    <property type="protein sequence ID" value="CAD14726"/>
    <property type="gene ID" value="RSc1024"/>
</dbReference>
<dbReference type="KEGG" id="rso:RSc1024"/>
<dbReference type="PATRIC" id="fig|267608.8.peg.1041"/>
<dbReference type="eggNOG" id="COG0443">
    <property type="taxonomic scope" value="Bacteria"/>
</dbReference>
<dbReference type="HOGENOM" id="CLU_005965_2_1_4"/>
<dbReference type="Proteomes" id="UP000001436">
    <property type="component" value="Chromosome"/>
</dbReference>
<dbReference type="GO" id="GO:0005524">
    <property type="term" value="F:ATP binding"/>
    <property type="evidence" value="ECO:0007669"/>
    <property type="project" value="UniProtKB-KW"/>
</dbReference>
<dbReference type="GO" id="GO:0016887">
    <property type="term" value="F:ATP hydrolysis activity"/>
    <property type="evidence" value="ECO:0007669"/>
    <property type="project" value="UniProtKB-UniRule"/>
</dbReference>
<dbReference type="GO" id="GO:0140662">
    <property type="term" value="F:ATP-dependent protein folding chaperone"/>
    <property type="evidence" value="ECO:0007669"/>
    <property type="project" value="InterPro"/>
</dbReference>
<dbReference type="GO" id="GO:0051082">
    <property type="term" value="F:unfolded protein binding"/>
    <property type="evidence" value="ECO:0007669"/>
    <property type="project" value="InterPro"/>
</dbReference>
<dbReference type="GO" id="GO:0016226">
    <property type="term" value="P:iron-sulfur cluster assembly"/>
    <property type="evidence" value="ECO:0007669"/>
    <property type="project" value="InterPro"/>
</dbReference>
<dbReference type="FunFam" id="3.30.420.40:FF:000046">
    <property type="entry name" value="Chaperone protein HscA"/>
    <property type="match status" value="1"/>
</dbReference>
<dbReference type="FunFam" id="2.60.34.10:FF:000005">
    <property type="entry name" value="Chaperone protein HscA homolog"/>
    <property type="match status" value="1"/>
</dbReference>
<dbReference type="Gene3D" id="1.20.1270.10">
    <property type="match status" value="1"/>
</dbReference>
<dbReference type="Gene3D" id="3.30.420.40">
    <property type="match status" value="2"/>
</dbReference>
<dbReference type="Gene3D" id="3.90.640.10">
    <property type="entry name" value="Actin, Chain A, domain 4"/>
    <property type="match status" value="1"/>
</dbReference>
<dbReference type="Gene3D" id="2.60.34.10">
    <property type="entry name" value="Substrate Binding Domain Of DNAk, Chain A, domain 1"/>
    <property type="match status" value="1"/>
</dbReference>
<dbReference type="HAMAP" id="MF_00679">
    <property type="entry name" value="HscA"/>
    <property type="match status" value="1"/>
</dbReference>
<dbReference type="InterPro" id="IPR043129">
    <property type="entry name" value="ATPase_NBD"/>
</dbReference>
<dbReference type="InterPro" id="IPR018181">
    <property type="entry name" value="Heat_shock_70_CS"/>
</dbReference>
<dbReference type="InterPro" id="IPR029048">
    <property type="entry name" value="HSP70_C_sf"/>
</dbReference>
<dbReference type="InterPro" id="IPR029047">
    <property type="entry name" value="HSP70_peptide-bd_sf"/>
</dbReference>
<dbReference type="InterPro" id="IPR013126">
    <property type="entry name" value="Hsp_70_fam"/>
</dbReference>
<dbReference type="InterPro" id="IPR010236">
    <property type="entry name" value="ISC_FeS_clus_asmbl_HscA"/>
</dbReference>
<dbReference type="NCBIfam" id="TIGR01991">
    <property type="entry name" value="HscA"/>
    <property type="match status" value="1"/>
</dbReference>
<dbReference type="NCBIfam" id="NF003520">
    <property type="entry name" value="PRK05183.1"/>
    <property type="match status" value="1"/>
</dbReference>
<dbReference type="PANTHER" id="PTHR19375">
    <property type="entry name" value="HEAT SHOCK PROTEIN 70KDA"/>
    <property type="match status" value="1"/>
</dbReference>
<dbReference type="Pfam" id="PF00012">
    <property type="entry name" value="HSP70"/>
    <property type="match status" value="1"/>
</dbReference>
<dbReference type="PRINTS" id="PR00301">
    <property type="entry name" value="HEATSHOCK70"/>
</dbReference>
<dbReference type="SUPFAM" id="SSF53067">
    <property type="entry name" value="Actin-like ATPase domain"/>
    <property type="match status" value="2"/>
</dbReference>
<dbReference type="SUPFAM" id="SSF100934">
    <property type="entry name" value="Heat shock protein 70kD (HSP70), C-terminal subdomain"/>
    <property type="match status" value="1"/>
</dbReference>
<dbReference type="SUPFAM" id="SSF100920">
    <property type="entry name" value="Heat shock protein 70kD (HSP70), peptide-binding domain"/>
    <property type="match status" value="1"/>
</dbReference>
<dbReference type="PROSITE" id="PS00297">
    <property type="entry name" value="HSP70_1"/>
    <property type="match status" value="1"/>
</dbReference>
<dbReference type="PROSITE" id="PS00329">
    <property type="entry name" value="HSP70_2"/>
    <property type="match status" value="1"/>
</dbReference>
<dbReference type="PROSITE" id="PS01036">
    <property type="entry name" value="HSP70_3"/>
    <property type="match status" value="1"/>
</dbReference>
<comment type="function">
    <text evidence="1">Chaperone involved in the maturation of iron-sulfur cluster-containing proteins. Has a low intrinsic ATPase activity which is markedly stimulated by HscB.</text>
</comment>
<comment type="similarity">
    <text evidence="1">Belongs to the heat shock protein 70 family.</text>
</comment>
<gene>
    <name evidence="1" type="primary">hscA</name>
    <name type="ordered locus">RSc1024</name>
    <name type="ORF">RS04231</name>
</gene>
<keyword id="KW-0067">ATP-binding</keyword>
<keyword id="KW-0143">Chaperone</keyword>
<keyword id="KW-0547">Nucleotide-binding</keyword>
<keyword id="KW-1185">Reference proteome</keyword>